<sequence length="156" mass="16157">MNIIEANVATPDARVAITIARFNNFINDSLLEGAIDALKRIGQVKDENITVVWVPGAYELPLAAGALAKTGKYDAVIALGTVIRGGTAHFEYVAGGASNGLAHVAQDSEIPVAFGVLTTESIEQAIERAGTKAGNKGAEAALTALEMINVLKAIKA</sequence>
<dbReference type="EC" id="2.5.1.78" evidence="1"/>
<dbReference type="EMBL" id="CP000964">
    <property type="protein sequence ID" value="ACI07466.1"/>
    <property type="molecule type" value="Genomic_DNA"/>
</dbReference>
<dbReference type="SMR" id="B5Y0X6"/>
<dbReference type="KEGG" id="kpe:KPK_4317"/>
<dbReference type="HOGENOM" id="CLU_089358_1_1_6"/>
<dbReference type="UniPathway" id="UPA00275">
    <property type="reaction ID" value="UER00404"/>
</dbReference>
<dbReference type="Proteomes" id="UP000001734">
    <property type="component" value="Chromosome"/>
</dbReference>
<dbReference type="GO" id="GO:0005829">
    <property type="term" value="C:cytosol"/>
    <property type="evidence" value="ECO:0007669"/>
    <property type="project" value="TreeGrafter"/>
</dbReference>
<dbReference type="GO" id="GO:0009349">
    <property type="term" value="C:riboflavin synthase complex"/>
    <property type="evidence" value="ECO:0007669"/>
    <property type="project" value="InterPro"/>
</dbReference>
<dbReference type="GO" id="GO:0000906">
    <property type="term" value="F:6,7-dimethyl-8-ribityllumazine synthase activity"/>
    <property type="evidence" value="ECO:0007669"/>
    <property type="project" value="UniProtKB-UniRule"/>
</dbReference>
<dbReference type="GO" id="GO:0009231">
    <property type="term" value="P:riboflavin biosynthetic process"/>
    <property type="evidence" value="ECO:0007669"/>
    <property type="project" value="UniProtKB-UniRule"/>
</dbReference>
<dbReference type="CDD" id="cd09209">
    <property type="entry name" value="Lumazine_synthase-I"/>
    <property type="match status" value="1"/>
</dbReference>
<dbReference type="FunFam" id="3.40.50.960:FF:000001">
    <property type="entry name" value="6,7-dimethyl-8-ribityllumazine synthase"/>
    <property type="match status" value="1"/>
</dbReference>
<dbReference type="Gene3D" id="3.40.50.960">
    <property type="entry name" value="Lumazine/riboflavin synthase"/>
    <property type="match status" value="1"/>
</dbReference>
<dbReference type="HAMAP" id="MF_00178">
    <property type="entry name" value="Lumazine_synth"/>
    <property type="match status" value="1"/>
</dbReference>
<dbReference type="InterPro" id="IPR034964">
    <property type="entry name" value="LS"/>
</dbReference>
<dbReference type="InterPro" id="IPR002180">
    <property type="entry name" value="LS/RS"/>
</dbReference>
<dbReference type="InterPro" id="IPR036467">
    <property type="entry name" value="LS/RS_sf"/>
</dbReference>
<dbReference type="NCBIfam" id="TIGR00114">
    <property type="entry name" value="lumazine-synth"/>
    <property type="match status" value="1"/>
</dbReference>
<dbReference type="NCBIfam" id="NF000812">
    <property type="entry name" value="PRK00061.1-4"/>
    <property type="match status" value="1"/>
</dbReference>
<dbReference type="PANTHER" id="PTHR21058:SF0">
    <property type="entry name" value="6,7-DIMETHYL-8-RIBITYLLUMAZINE SYNTHASE"/>
    <property type="match status" value="1"/>
</dbReference>
<dbReference type="PANTHER" id="PTHR21058">
    <property type="entry name" value="6,7-DIMETHYL-8-RIBITYLLUMAZINE SYNTHASE DMRL SYNTHASE LUMAZINE SYNTHASE"/>
    <property type="match status" value="1"/>
</dbReference>
<dbReference type="Pfam" id="PF00885">
    <property type="entry name" value="DMRL_synthase"/>
    <property type="match status" value="1"/>
</dbReference>
<dbReference type="SUPFAM" id="SSF52121">
    <property type="entry name" value="Lumazine synthase"/>
    <property type="match status" value="1"/>
</dbReference>
<accession>B5Y0X6</accession>
<keyword id="KW-0686">Riboflavin biosynthesis</keyword>
<keyword id="KW-0808">Transferase</keyword>
<proteinExistence type="inferred from homology"/>
<evidence type="ECO:0000255" key="1">
    <source>
        <dbReference type="HAMAP-Rule" id="MF_00178"/>
    </source>
</evidence>
<organism>
    <name type="scientific">Klebsiella pneumoniae (strain 342)</name>
    <dbReference type="NCBI Taxonomy" id="507522"/>
    <lineage>
        <taxon>Bacteria</taxon>
        <taxon>Pseudomonadati</taxon>
        <taxon>Pseudomonadota</taxon>
        <taxon>Gammaproteobacteria</taxon>
        <taxon>Enterobacterales</taxon>
        <taxon>Enterobacteriaceae</taxon>
        <taxon>Klebsiella/Raoultella group</taxon>
        <taxon>Klebsiella</taxon>
        <taxon>Klebsiella pneumoniae complex</taxon>
    </lineage>
</organism>
<name>RISB_KLEP3</name>
<gene>
    <name evidence="1" type="primary">ribH</name>
    <name type="ordered locus">KPK_4317</name>
</gene>
<reference key="1">
    <citation type="journal article" date="2008" name="PLoS Genet.">
        <title>Complete genome sequence of the N2-fixing broad host range endophyte Klebsiella pneumoniae 342 and virulence predictions verified in mice.</title>
        <authorList>
            <person name="Fouts D.E."/>
            <person name="Tyler H.L."/>
            <person name="DeBoy R.T."/>
            <person name="Daugherty S."/>
            <person name="Ren Q."/>
            <person name="Badger J.H."/>
            <person name="Durkin A.S."/>
            <person name="Huot H."/>
            <person name="Shrivastava S."/>
            <person name="Kothari S."/>
            <person name="Dodson R.J."/>
            <person name="Mohamoud Y."/>
            <person name="Khouri H."/>
            <person name="Roesch L.F.W."/>
            <person name="Krogfelt K.A."/>
            <person name="Struve C."/>
            <person name="Triplett E.W."/>
            <person name="Methe B.A."/>
        </authorList>
    </citation>
    <scope>NUCLEOTIDE SEQUENCE [LARGE SCALE GENOMIC DNA]</scope>
    <source>
        <strain>342</strain>
    </source>
</reference>
<protein>
    <recommendedName>
        <fullName evidence="1">6,7-dimethyl-8-ribityllumazine synthase</fullName>
        <shortName evidence="1">DMRL synthase</shortName>
        <shortName evidence="1">LS</shortName>
        <shortName evidence="1">Lumazine synthase</shortName>
        <ecNumber evidence="1">2.5.1.78</ecNumber>
    </recommendedName>
</protein>
<feature type="chain" id="PRO_1000098200" description="6,7-dimethyl-8-ribityllumazine synthase">
    <location>
        <begin position="1"/>
        <end position="156"/>
    </location>
</feature>
<feature type="active site" description="Proton donor" evidence="1">
    <location>
        <position position="89"/>
    </location>
</feature>
<feature type="binding site" evidence="1">
    <location>
        <position position="22"/>
    </location>
    <ligand>
        <name>5-amino-6-(D-ribitylamino)uracil</name>
        <dbReference type="ChEBI" id="CHEBI:15934"/>
    </ligand>
</feature>
<feature type="binding site" evidence="1">
    <location>
        <begin position="57"/>
        <end position="59"/>
    </location>
    <ligand>
        <name>5-amino-6-(D-ribitylamino)uracil</name>
        <dbReference type="ChEBI" id="CHEBI:15934"/>
    </ligand>
</feature>
<feature type="binding site" evidence="1">
    <location>
        <begin position="81"/>
        <end position="83"/>
    </location>
    <ligand>
        <name>5-amino-6-(D-ribitylamino)uracil</name>
        <dbReference type="ChEBI" id="CHEBI:15934"/>
    </ligand>
</feature>
<feature type="binding site" evidence="1">
    <location>
        <begin position="86"/>
        <end position="87"/>
    </location>
    <ligand>
        <name>(2S)-2-hydroxy-3-oxobutyl phosphate</name>
        <dbReference type="ChEBI" id="CHEBI:58830"/>
    </ligand>
</feature>
<feature type="binding site" evidence="1">
    <location>
        <position position="114"/>
    </location>
    <ligand>
        <name>5-amino-6-(D-ribitylamino)uracil</name>
        <dbReference type="ChEBI" id="CHEBI:15934"/>
    </ligand>
</feature>
<feature type="binding site" evidence="1">
    <location>
        <position position="128"/>
    </location>
    <ligand>
        <name>(2S)-2-hydroxy-3-oxobutyl phosphate</name>
        <dbReference type="ChEBI" id="CHEBI:58830"/>
    </ligand>
</feature>
<comment type="function">
    <text evidence="1">Catalyzes the formation of 6,7-dimethyl-8-ribityllumazine by condensation of 5-amino-6-(D-ribitylamino)uracil with 3,4-dihydroxy-2-butanone 4-phosphate. This is the penultimate step in the biosynthesis of riboflavin.</text>
</comment>
<comment type="catalytic activity">
    <reaction evidence="1">
        <text>(2S)-2-hydroxy-3-oxobutyl phosphate + 5-amino-6-(D-ribitylamino)uracil = 6,7-dimethyl-8-(1-D-ribityl)lumazine + phosphate + 2 H2O + H(+)</text>
        <dbReference type="Rhea" id="RHEA:26152"/>
        <dbReference type="ChEBI" id="CHEBI:15377"/>
        <dbReference type="ChEBI" id="CHEBI:15378"/>
        <dbReference type="ChEBI" id="CHEBI:15934"/>
        <dbReference type="ChEBI" id="CHEBI:43474"/>
        <dbReference type="ChEBI" id="CHEBI:58201"/>
        <dbReference type="ChEBI" id="CHEBI:58830"/>
        <dbReference type="EC" id="2.5.1.78"/>
    </reaction>
</comment>
<comment type="pathway">
    <text evidence="1">Cofactor biosynthesis; riboflavin biosynthesis; riboflavin from 2-hydroxy-3-oxobutyl phosphate and 5-amino-6-(D-ribitylamino)uracil: step 1/2.</text>
</comment>
<comment type="subunit">
    <text evidence="1">Forms an icosahedral capsid composed of 60 subunits, arranged as a dodecamer of pentamers.</text>
</comment>
<comment type="similarity">
    <text evidence="1">Belongs to the DMRL synthase family.</text>
</comment>